<gene>
    <name evidence="1" type="primary">apt</name>
    <name type="ordered locus">Haur_4379</name>
</gene>
<proteinExistence type="inferred from homology"/>
<comment type="function">
    <text evidence="1">Catalyzes a salvage reaction resulting in the formation of AMP, that is energically less costly than de novo synthesis.</text>
</comment>
<comment type="catalytic activity">
    <reaction evidence="1">
        <text>AMP + diphosphate = 5-phospho-alpha-D-ribose 1-diphosphate + adenine</text>
        <dbReference type="Rhea" id="RHEA:16609"/>
        <dbReference type="ChEBI" id="CHEBI:16708"/>
        <dbReference type="ChEBI" id="CHEBI:33019"/>
        <dbReference type="ChEBI" id="CHEBI:58017"/>
        <dbReference type="ChEBI" id="CHEBI:456215"/>
        <dbReference type="EC" id="2.4.2.7"/>
    </reaction>
</comment>
<comment type="pathway">
    <text evidence="1">Purine metabolism; AMP biosynthesis via salvage pathway; AMP from adenine: step 1/1.</text>
</comment>
<comment type="subunit">
    <text evidence="1">Homodimer.</text>
</comment>
<comment type="subcellular location">
    <subcellularLocation>
        <location evidence="1">Cytoplasm</location>
    </subcellularLocation>
</comment>
<comment type="similarity">
    <text evidence="1">Belongs to the purine/pyrimidine phosphoribosyltransferase family.</text>
</comment>
<feature type="chain" id="PRO_1000116246" description="Adenine phosphoribosyltransferase">
    <location>
        <begin position="1"/>
        <end position="172"/>
    </location>
</feature>
<name>APT_HERA2</name>
<sequence>MSLDLTQFVRNIPDFPIPGVQFKDITPLLGNAQAFDAAIEHFAQRYANQQLQAIVGIESRGFIFGAPLALRLGIGFVPIRKPGKLPAQTIGVDYSLEYGTNRLEIHNDALQAGDRVVVVDDLLATGGTVVAACDLLNQLGAEVVEAAFLIELTFLGGREKLGNRPFYAQIQY</sequence>
<organism>
    <name type="scientific">Herpetosiphon aurantiacus (strain ATCC 23779 / DSM 785 / 114-95)</name>
    <dbReference type="NCBI Taxonomy" id="316274"/>
    <lineage>
        <taxon>Bacteria</taxon>
        <taxon>Bacillati</taxon>
        <taxon>Chloroflexota</taxon>
        <taxon>Chloroflexia</taxon>
        <taxon>Herpetosiphonales</taxon>
        <taxon>Herpetosiphonaceae</taxon>
        <taxon>Herpetosiphon</taxon>
    </lineage>
</organism>
<accession>A9AYX1</accession>
<dbReference type="EC" id="2.4.2.7" evidence="1"/>
<dbReference type="EMBL" id="CP000875">
    <property type="protein sequence ID" value="ABX07011.1"/>
    <property type="molecule type" value="Genomic_DNA"/>
</dbReference>
<dbReference type="SMR" id="A9AYX1"/>
<dbReference type="FunCoup" id="A9AYX1">
    <property type="interactions" value="342"/>
</dbReference>
<dbReference type="STRING" id="316274.Haur_4379"/>
<dbReference type="KEGG" id="hau:Haur_4379"/>
<dbReference type="eggNOG" id="COG0503">
    <property type="taxonomic scope" value="Bacteria"/>
</dbReference>
<dbReference type="HOGENOM" id="CLU_063339_3_0_0"/>
<dbReference type="InParanoid" id="A9AYX1"/>
<dbReference type="UniPathway" id="UPA00588">
    <property type="reaction ID" value="UER00646"/>
</dbReference>
<dbReference type="Proteomes" id="UP000000787">
    <property type="component" value="Chromosome"/>
</dbReference>
<dbReference type="GO" id="GO:0005737">
    <property type="term" value="C:cytoplasm"/>
    <property type="evidence" value="ECO:0007669"/>
    <property type="project" value="UniProtKB-SubCell"/>
</dbReference>
<dbReference type="GO" id="GO:0002055">
    <property type="term" value="F:adenine binding"/>
    <property type="evidence" value="ECO:0007669"/>
    <property type="project" value="TreeGrafter"/>
</dbReference>
<dbReference type="GO" id="GO:0003999">
    <property type="term" value="F:adenine phosphoribosyltransferase activity"/>
    <property type="evidence" value="ECO:0007669"/>
    <property type="project" value="UniProtKB-UniRule"/>
</dbReference>
<dbReference type="GO" id="GO:0016208">
    <property type="term" value="F:AMP binding"/>
    <property type="evidence" value="ECO:0007669"/>
    <property type="project" value="TreeGrafter"/>
</dbReference>
<dbReference type="GO" id="GO:0006168">
    <property type="term" value="P:adenine salvage"/>
    <property type="evidence" value="ECO:0007669"/>
    <property type="project" value="InterPro"/>
</dbReference>
<dbReference type="GO" id="GO:0044209">
    <property type="term" value="P:AMP salvage"/>
    <property type="evidence" value="ECO:0007669"/>
    <property type="project" value="UniProtKB-UniRule"/>
</dbReference>
<dbReference type="GO" id="GO:0006166">
    <property type="term" value="P:purine ribonucleoside salvage"/>
    <property type="evidence" value="ECO:0007669"/>
    <property type="project" value="UniProtKB-KW"/>
</dbReference>
<dbReference type="CDD" id="cd06223">
    <property type="entry name" value="PRTases_typeI"/>
    <property type="match status" value="1"/>
</dbReference>
<dbReference type="FunFam" id="3.40.50.2020:FF:000004">
    <property type="entry name" value="Adenine phosphoribosyltransferase"/>
    <property type="match status" value="1"/>
</dbReference>
<dbReference type="Gene3D" id="3.40.50.2020">
    <property type="match status" value="1"/>
</dbReference>
<dbReference type="HAMAP" id="MF_00004">
    <property type="entry name" value="Aden_phosphoribosyltr"/>
    <property type="match status" value="1"/>
</dbReference>
<dbReference type="InterPro" id="IPR005764">
    <property type="entry name" value="Ade_phspho_trans"/>
</dbReference>
<dbReference type="InterPro" id="IPR000836">
    <property type="entry name" value="PRibTrfase_dom"/>
</dbReference>
<dbReference type="InterPro" id="IPR029057">
    <property type="entry name" value="PRTase-like"/>
</dbReference>
<dbReference type="InterPro" id="IPR050054">
    <property type="entry name" value="UPRTase/APRTase"/>
</dbReference>
<dbReference type="NCBIfam" id="TIGR01090">
    <property type="entry name" value="apt"/>
    <property type="match status" value="1"/>
</dbReference>
<dbReference type="NCBIfam" id="NF002634">
    <property type="entry name" value="PRK02304.1-3"/>
    <property type="match status" value="1"/>
</dbReference>
<dbReference type="NCBIfam" id="NF002636">
    <property type="entry name" value="PRK02304.1-5"/>
    <property type="match status" value="1"/>
</dbReference>
<dbReference type="PANTHER" id="PTHR32315">
    <property type="entry name" value="ADENINE PHOSPHORIBOSYLTRANSFERASE"/>
    <property type="match status" value="1"/>
</dbReference>
<dbReference type="PANTHER" id="PTHR32315:SF3">
    <property type="entry name" value="ADENINE PHOSPHORIBOSYLTRANSFERASE"/>
    <property type="match status" value="1"/>
</dbReference>
<dbReference type="Pfam" id="PF00156">
    <property type="entry name" value="Pribosyltran"/>
    <property type="match status" value="1"/>
</dbReference>
<dbReference type="SUPFAM" id="SSF53271">
    <property type="entry name" value="PRTase-like"/>
    <property type="match status" value="1"/>
</dbReference>
<dbReference type="PROSITE" id="PS00103">
    <property type="entry name" value="PUR_PYR_PR_TRANSFER"/>
    <property type="match status" value="1"/>
</dbReference>
<keyword id="KW-0963">Cytoplasm</keyword>
<keyword id="KW-0328">Glycosyltransferase</keyword>
<keyword id="KW-0660">Purine salvage</keyword>
<keyword id="KW-0808">Transferase</keyword>
<evidence type="ECO:0000255" key="1">
    <source>
        <dbReference type="HAMAP-Rule" id="MF_00004"/>
    </source>
</evidence>
<protein>
    <recommendedName>
        <fullName evidence="1">Adenine phosphoribosyltransferase</fullName>
        <shortName evidence="1">APRT</shortName>
        <ecNumber evidence="1">2.4.2.7</ecNumber>
    </recommendedName>
</protein>
<reference key="1">
    <citation type="journal article" date="2011" name="Stand. Genomic Sci.">
        <title>Complete genome sequence of the filamentous gliding predatory bacterium Herpetosiphon aurantiacus type strain (114-95(T)).</title>
        <authorList>
            <person name="Kiss H."/>
            <person name="Nett M."/>
            <person name="Domin N."/>
            <person name="Martin K."/>
            <person name="Maresca J.A."/>
            <person name="Copeland A."/>
            <person name="Lapidus A."/>
            <person name="Lucas S."/>
            <person name="Berry K.W."/>
            <person name="Glavina Del Rio T."/>
            <person name="Dalin E."/>
            <person name="Tice H."/>
            <person name="Pitluck S."/>
            <person name="Richardson P."/>
            <person name="Bruce D."/>
            <person name="Goodwin L."/>
            <person name="Han C."/>
            <person name="Detter J.C."/>
            <person name="Schmutz J."/>
            <person name="Brettin T."/>
            <person name="Land M."/>
            <person name="Hauser L."/>
            <person name="Kyrpides N.C."/>
            <person name="Ivanova N."/>
            <person name="Goeker M."/>
            <person name="Woyke T."/>
            <person name="Klenk H.P."/>
            <person name="Bryant D.A."/>
        </authorList>
    </citation>
    <scope>NUCLEOTIDE SEQUENCE [LARGE SCALE GENOMIC DNA]</scope>
    <source>
        <strain>ATCC 23779 / DSM 785 / 114-95</strain>
    </source>
</reference>